<proteinExistence type="inferred from homology"/>
<reference key="1">
    <citation type="journal article" date="2008" name="Environ. Microbiol.">
        <title>The genome of Erwinia tasmaniensis strain Et1/99, a non-pathogenic bacterium in the genus Erwinia.</title>
        <authorList>
            <person name="Kube M."/>
            <person name="Migdoll A.M."/>
            <person name="Mueller I."/>
            <person name="Kuhl H."/>
            <person name="Beck A."/>
            <person name="Reinhardt R."/>
            <person name="Geider K."/>
        </authorList>
    </citation>
    <scope>NUCLEOTIDE SEQUENCE [LARGE SCALE GENOMIC DNA]</scope>
    <source>
        <strain>DSM 17950 / CFBP 7177 / CIP 109463 / NCPPB 4357 / Et1/99</strain>
    </source>
</reference>
<organism>
    <name type="scientific">Erwinia tasmaniensis (strain DSM 17950 / CFBP 7177 / CIP 109463 / NCPPB 4357 / Et1/99)</name>
    <dbReference type="NCBI Taxonomy" id="465817"/>
    <lineage>
        <taxon>Bacteria</taxon>
        <taxon>Pseudomonadati</taxon>
        <taxon>Pseudomonadota</taxon>
        <taxon>Gammaproteobacteria</taxon>
        <taxon>Enterobacterales</taxon>
        <taxon>Erwiniaceae</taxon>
        <taxon>Erwinia</taxon>
    </lineage>
</organism>
<feature type="chain" id="PRO_1000145013" description="Protein translocase subunit SecA">
    <location>
        <begin position="1"/>
        <end position="901"/>
    </location>
</feature>
<feature type="region of interest" description="Disordered" evidence="2">
    <location>
        <begin position="839"/>
        <end position="901"/>
    </location>
</feature>
<feature type="compositionally biased region" description="Basic and acidic residues" evidence="2">
    <location>
        <begin position="841"/>
        <end position="850"/>
    </location>
</feature>
<feature type="compositionally biased region" description="Basic residues" evidence="2">
    <location>
        <begin position="891"/>
        <end position="901"/>
    </location>
</feature>
<feature type="binding site" evidence="1">
    <location>
        <position position="87"/>
    </location>
    <ligand>
        <name>ATP</name>
        <dbReference type="ChEBI" id="CHEBI:30616"/>
    </ligand>
</feature>
<feature type="binding site" evidence="1">
    <location>
        <begin position="105"/>
        <end position="109"/>
    </location>
    <ligand>
        <name>ATP</name>
        <dbReference type="ChEBI" id="CHEBI:30616"/>
    </ligand>
</feature>
<feature type="binding site" evidence="1">
    <location>
        <position position="512"/>
    </location>
    <ligand>
        <name>ATP</name>
        <dbReference type="ChEBI" id="CHEBI:30616"/>
    </ligand>
</feature>
<feature type="binding site" evidence="1">
    <location>
        <position position="885"/>
    </location>
    <ligand>
        <name>Zn(2+)</name>
        <dbReference type="ChEBI" id="CHEBI:29105"/>
    </ligand>
</feature>
<feature type="binding site" evidence="1">
    <location>
        <position position="887"/>
    </location>
    <ligand>
        <name>Zn(2+)</name>
        <dbReference type="ChEBI" id="CHEBI:29105"/>
    </ligand>
</feature>
<feature type="binding site" evidence="1">
    <location>
        <position position="896"/>
    </location>
    <ligand>
        <name>Zn(2+)</name>
        <dbReference type="ChEBI" id="CHEBI:29105"/>
    </ligand>
</feature>
<feature type="binding site" evidence="1">
    <location>
        <position position="897"/>
    </location>
    <ligand>
        <name>Zn(2+)</name>
        <dbReference type="ChEBI" id="CHEBI:29105"/>
    </ligand>
</feature>
<comment type="function">
    <text evidence="1">Part of the Sec protein translocase complex. Interacts with the SecYEG preprotein conducting channel. Has a central role in coupling the hydrolysis of ATP to the transfer of proteins into and across the cell membrane, serving both as a receptor for the preprotein-SecB complex and as an ATP-driven molecular motor driving the stepwise translocation of polypeptide chains across the membrane.</text>
</comment>
<comment type="catalytic activity">
    <reaction evidence="1">
        <text>ATP + H2O + cellular proteinSide 1 = ADP + phosphate + cellular proteinSide 2.</text>
        <dbReference type="EC" id="7.4.2.8"/>
    </reaction>
</comment>
<comment type="cofactor">
    <cofactor evidence="1">
        <name>Zn(2+)</name>
        <dbReference type="ChEBI" id="CHEBI:29105"/>
    </cofactor>
    <text evidence="1">May bind 1 zinc ion per subunit.</text>
</comment>
<comment type="subunit">
    <text evidence="1">Monomer and homodimer. Part of the essential Sec protein translocation apparatus which comprises SecA, SecYEG and auxiliary proteins SecDF-YajC and YidC.</text>
</comment>
<comment type="subcellular location">
    <subcellularLocation>
        <location evidence="1">Cell inner membrane</location>
        <topology evidence="1">Peripheral membrane protein</topology>
        <orientation evidence="1">Cytoplasmic side</orientation>
    </subcellularLocation>
    <subcellularLocation>
        <location evidence="1">Cytoplasm</location>
    </subcellularLocation>
    <text evidence="1">Distribution is 50-50.</text>
</comment>
<comment type="induction">
    <text evidence="1">Repressed under conditions of excess protein secretion capacity and derepressed when protein secretion becomes limiting. This is regulated by SecM.</text>
</comment>
<comment type="similarity">
    <text evidence="1">Belongs to the SecA family.</text>
</comment>
<keyword id="KW-0067">ATP-binding</keyword>
<keyword id="KW-0997">Cell inner membrane</keyword>
<keyword id="KW-1003">Cell membrane</keyword>
<keyword id="KW-0963">Cytoplasm</keyword>
<keyword id="KW-0472">Membrane</keyword>
<keyword id="KW-0479">Metal-binding</keyword>
<keyword id="KW-0547">Nucleotide-binding</keyword>
<keyword id="KW-0653">Protein transport</keyword>
<keyword id="KW-1185">Reference proteome</keyword>
<keyword id="KW-1278">Translocase</keyword>
<keyword id="KW-0811">Translocation</keyword>
<keyword id="KW-0813">Transport</keyword>
<keyword id="KW-0862">Zinc</keyword>
<evidence type="ECO:0000255" key="1">
    <source>
        <dbReference type="HAMAP-Rule" id="MF_01382"/>
    </source>
</evidence>
<evidence type="ECO:0000256" key="2">
    <source>
        <dbReference type="SAM" id="MobiDB-lite"/>
    </source>
</evidence>
<name>SECA_ERWT9</name>
<protein>
    <recommendedName>
        <fullName evidence="1">Protein translocase subunit SecA</fullName>
        <ecNumber evidence="1">7.4.2.8</ecNumber>
    </recommendedName>
</protein>
<dbReference type="EC" id="7.4.2.8" evidence="1"/>
<dbReference type="EMBL" id="CU468135">
    <property type="protein sequence ID" value="CAO95810.1"/>
    <property type="molecule type" value="Genomic_DNA"/>
</dbReference>
<dbReference type="RefSeq" id="WP_012440512.1">
    <property type="nucleotide sequence ID" value="NC_010694.1"/>
</dbReference>
<dbReference type="SMR" id="B2VD75"/>
<dbReference type="STRING" id="465817.ETA_07640"/>
<dbReference type="KEGG" id="eta:ETA_07640"/>
<dbReference type="eggNOG" id="COG0653">
    <property type="taxonomic scope" value="Bacteria"/>
</dbReference>
<dbReference type="HOGENOM" id="CLU_005314_3_0_6"/>
<dbReference type="OrthoDB" id="9805579at2"/>
<dbReference type="Proteomes" id="UP000001726">
    <property type="component" value="Chromosome"/>
</dbReference>
<dbReference type="GO" id="GO:0031522">
    <property type="term" value="C:cell envelope Sec protein transport complex"/>
    <property type="evidence" value="ECO:0007669"/>
    <property type="project" value="TreeGrafter"/>
</dbReference>
<dbReference type="GO" id="GO:0005829">
    <property type="term" value="C:cytosol"/>
    <property type="evidence" value="ECO:0007669"/>
    <property type="project" value="TreeGrafter"/>
</dbReference>
<dbReference type="GO" id="GO:0005886">
    <property type="term" value="C:plasma membrane"/>
    <property type="evidence" value="ECO:0007669"/>
    <property type="project" value="UniProtKB-SubCell"/>
</dbReference>
<dbReference type="GO" id="GO:0005524">
    <property type="term" value="F:ATP binding"/>
    <property type="evidence" value="ECO:0007669"/>
    <property type="project" value="UniProtKB-UniRule"/>
</dbReference>
<dbReference type="GO" id="GO:0046872">
    <property type="term" value="F:metal ion binding"/>
    <property type="evidence" value="ECO:0007669"/>
    <property type="project" value="UniProtKB-KW"/>
</dbReference>
<dbReference type="GO" id="GO:0008564">
    <property type="term" value="F:protein-exporting ATPase activity"/>
    <property type="evidence" value="ECO:0007669"/>
    <property type="project" value="UniProtKB-EC"/>
</dbReference>
<dbReference type="GO" id="GO:0065002">
    <property type="term" value="P:intracellular protein transmembrane transport"/>
    <property type="evidence" value="ECO:0007669"/>
    <property type="project" value="UniProtKB-UniRule"/>
</dbReference>
<dbReference type="GO" id="GO:0017038">
    <property type="term" value="P:protein import"/>
    <property type="evidence" value="ECO:0007669"/>
    <property type="project" value="InterPro"/>
</dbReference>
<dbReference type="GO" id="GO:0006605">
    <property type="term" value="P:protein targeting"/>
    <property type="evidence" value="ECO:0007669"/>
    <property type="project" value="UniProtKB-UniRule"/>
</dbReference>
<dbReference type="GO" id="GO:0043952">
    <property type="term" value="P:protein transport by the Sec complex"/>
    <property type="evidence" value="ECO:0007669"/>
    <property type="project" value="TreeGrafter"/>
</dbReference>
<dbReference type="CDD" id="cd17928">
    <property type="entry name" value="DEXDc_SecA"/>
    <property type="match status" value="1"/>
</dbReference>
<dbReference type="CDD" id="cd18803">
    <property type="entry name" value="SF2_C_secA"/>
    <property type="match status" value="1"/>
</dbReference>
<dbReference type="FunFam" id="1.10.3060.10:FF:000001">
    <property type="entry name" value="Preprotein translocase subunit SecA"/>
    <property type="match status" value="1"/>
</dbReference>
<dbReference type="FunFam" id="3.40.50.300:FF:000081">
    <property type="entry name" value="Preprotein translocase subunit SecA"/>
    <property type="match status" value="1"/>
</dbReference>
<dbReference type="FunFam" id="3.40.50.300:FF:000113">
    <property type="entry name" value="Preprotein translocase subunit SecA"/>
    <property type="match status" value="1"/>
</dbReference>
<dbReference type="FunFam" id="3.90.1440.10:FF:000001">
    <property type="entry name" value="Preprotein translocase subunit SecA"/>
    <property type="match status" value="1"/>
</dbReference>
<dbReference type="Gene3D" id="1.10.3060.10">
    <property type="entry name" value="Helical scaffold and wing domains of SecA"/>
    <property type="match status" value="1"/>
</dbReference>
<dbReference type="Gene3D" id="3.40.50.300">
    <property type="entry name" value="P-loop containing nucleotide triphosphate hydrolases"/>
    <property type="match status" value="2"/>
</dbReference>
<dbReference type="Gene3D" id="3.90.1440.10">
    <property type="entry name" value="SecA, preprotein cross-linking domain"/>
    <property type="match status" value="1"/>
</dbReference>
<dbReference type="HAMAP" id="MF_01382">
    <property type="entry name" value="SecA"/>
    <property type="match status" value="1"/>
</dbReference>
<dbReference type="InterPro" id="IPR014001">
    <property type="entry name" value="Helicase_ATP-bd"/>
</dbReference>
<dbReference type="InterPro" id="IPR001650">
    <property type="entry name" value="Helicase_C-like"/>
</dbReference>
<dbReference type="InterPro" id="IPR027417">
    <property type="entry name" value="P-loop_NTPase"/>
</dbReference>
<dbReference type="InterPro" id="IPR004027">
    <property type="entry name" value="SEC_C_motif"/>
</dbReference>
<dbReference type="InterPro" id="IPR000185">
    <property type="entry name" value="SecA"/>
</dbReference>
<dbReference type="InterPro" id="IPR020937">
    <property type="entry name" value="SecA_CS"/>
</dbReference>
<dbReference type="InterPro" id="IPR011115">
    <property type="entry name" value="SecA_DEAD"/>
</dbReference>
<dbReference type="InterPro" id="IPR014018">
    <property type="entry name" value="SecA_motor_DEAD"/>
</dbReference>
<dbReference type="InterPro" id="IPR011130">
    <property type="entry name" value="SecA_preprotein_X-link_dom"/>
</dbReference>
<dbReference type="InterPro" id="IPR044722">
    <property type="entry name" value="SecA_SF2_C"/>
</dbReference>
<dbReference type="InterPro" id="IPR011116">
    <property type="entry name" value="SecA_Wing/Scaffold"/>
</dbReference>
<dbReference type="InterPro" id="IPR036266">
    <property type="entry name" value="SecA_Wing/Scaffold_sf"/>
</dbReference>
<dbReference type="InterPro" id="IPR036670">
    <property type="entry name" value="SecA_X-link_sf"/>
</dbReference>
<dbReference type="NCBIfam" id="NF009538">
    <property type="entry name" value="PRK12904.1"/>
    <property type="match status" value="1"/>
</dbReference>
<dbReference type="NCBIfam" id="TIGR00963">
    <property type="entry name" value="secA"/>
    <property type="match status" value="1"/>
</dbReference>
<dbReference type="PANTHER" id="PTHR30612:SF0">
    <property type="entry name" value="CHLOROPLAST PROTEIN-TRANSPORTING ATPASE"/>
    <property type="match status" value="1"/>
</dbReference>
<dbReference type="PANTHER" id="PTHR30612">
    <property type="entry name" value="SECA INNER MEMBRANE COMPONENT OF SEC PROTEIN SECRETION SYSTEM"/>
    <property type="match status" value="1"/>
</dbReference>
<dbReference type="Pfam" id="PF21090">
    <property type="entry name" value="P-loop_SecA"/>
    <property type="match status" value="1"/>
</dbReference>
<dbReference type="Pfam" id="PF02810">
    <property type="entry name" value="SEC-C"/>
    <property type="match status" value="1"/>
</dbReference>
<dbReference type="Pfam" id="PF07517">
    <property type="entry name" value="SecA_DEAD"/>
    <property type="match status" value="1"/>
</dbReference>
<dbReference type="Pfam" id="PF01043">
    <property type="entry name" value="SecA_PP_bind"/>
    <property type="match status" value="1"/>
</dbReference>
<dbReference type="Pfam" id="PF07516">
    <property type="entry name" value="SecA_SW"/>
    <property type="match status" value="1"/>
</dbReference>
<dbReference type="PRINTS" id="PR00906">
    <property type="entry name" value="SECA"/>
</dbReference>
<dbReference type="SMART" id="SM00957">
    <property type="entry name" value="SecA_DEAD"/>
    <property type="match status" value="1"/>
</dbReference>
<dbReference type="SMART" id="SM00958">
    <property type="entry name" value="SecA_PP_bind"/>
    <property type="match status" value="1"/>
</dbReference>
<dbReference type="SUPFAM" id="SSF81886">
    <property type="entry name" value="Helical scaffold and wing domains of SecA"/>
    <property type="match status" value="1"/>
</dbReference>
<dbReference type="SUPFAM" id="SSF52540">
    <property type="entry name" value="P-loop containing nucleoside triphosphate hydrolases"/>
    <property type="match status" value="2"/>
</dbReference>
<dbReference type="SUPFAM" id="SSF81767">
    <property type="entry name" value="Pre-protein crosslinking domain of SecA"/>
    <property type="match status" value="1"/>
</dbReference>
<dbReference type="PROSITE" id="PS01312">
    <property type="entry name" value="SECA"/>
    <property type="match status" value="1"/>
</dbReference>
<dbReference type="PROSITE" id="PS51196">
    <property type="entry name" value="SECA_MOTOR_DEAD"/>
    <property type="match status" value="1"/>
</dbReference>
<accession>B2VD75</accession>
<gene>
    <name evidence="1" type="primary">secA</name>
    <name type="ordered locus">ETA_07640</name>
</gene>
<sequence length="901" mass="101756">MLIKLLTKVFGSSNDRTLRRMRKAVEQINKMEPDFVKLSDDELKAKTIEFRARLEKGEELEALIPEAFATVREASKRVFGMRHFDVQLLGGMVLNDRCIAEMRTGEGKTLTATLPAYLNALSGKGVHVVTVNDYLAQRDAENNRALFEFLGLSIGINLPGLPAPAKREAYAADITYGTNNEYGFDYLRDNMAFSPEERVQRKLNYALVDEVDSILIDEARTPLIISGPAEDSSELYIKVNKIIPNLIRQEKEDSDSFQGEGHFSVDEKARQVHLTERGLVAVEELMVSEGIMAEGESLYSPGNIMMMHHVTAALRAHVLFTRDVDYIVKDGEVIIVDEHTGRTMQGRRWSDGLHQAVEAKEGVDIQNENQTLASITFQNYFRLYNKLAGMTGTADTEAFEFSSIYKLDTIVIPTNRPMVRKDLPDLVYMTEMEKIGAIIEDIRERTANGQPVLVGTISIEKSEVVSQELTRAGVKHEVLNAKFHAREADIVSQAGQPGAVTIATNMAGRGTDIVLGGSWQAEIAALEDASAEQIDAIKAAWKIRHDAVLASGGLHIIGTERHESRRIDNQLRGRSGRQGDHGSSRFYLSMEDALMRIFASDRVTNMMRKLGMKPGEAIEHPWVTKAIANAQRKVESRNFDIRKQLLEYDDVANDQRRAIYSQRNELLDVSDVSETIASIREDVYKTTIDSYIPPQSMEEMWDVAGLQERLSNDFDLTLPIADWLVAEPNLHEETLRERIMQQAQEQYQRKEEVVGVEMMRSFEKGVMLQTLDSLWKEHLAAMDYLRQGIHLRGYAQKDPKQEYKRESFAMFAAMLESLKYEVVSTLSKVQVRMPEEVEQMEEQRRQESERLAQQQQLSHVDAETEAAQSLAEQSGERKVGRNDPCPCGSGKKYKQCHGRLA</sequence>